<evidence type="ECO:0000250" key="1"/>
<evidence type="ECO:0000250" key="2">
    <source>
        <dbReference type="UniProtKB" id="Q9UBG0"/>
    </source>
</evidence>
<evidence type="ECO:0000255" key="3"/>
<evidence type="ECO:0000255" key="4">
    <source>
        <dbReference type="PROSITE-ProRule" id="PRU00040"/>
    </source>
</evidence>
<evidence type="ECO:0000255" key="5">
    <source>
        <dbReference type="PROSITE-ProRule" id="PRU00174"/>
    </source>
</evidence>
<evidence type="ECO:0000255" key="6">
    <source>
        <dbReference type="PROSITE-ProRule" id="PRU00479"/>
    </source>
</evidence>
<evidence type="ECO:0000256" key="7">
    <source>
        <dbReference type="SAM" id="MobiDB-lite"/>
    </source>
</evidence>
<evidence type="ECO:0000269" key="8">
    <source>
    </source>
</evidence>
<evidence type="ECO:0000269" key="9">
    <source>
    </source>
</evidence>
<evidence type="ECO:0000305" key="10"/>
<reference key="1">
    <citation type="journal article" date="2005" name="J. Biol. Chem.">
        <title>Endo180 binds to the C-terminal region of type I collagen.</title>
        <authorList>
            <person name="Thomas E.K."/>
            <person name="Nakamura M."/>
            <person name="Wienke D."/>
            <person name="Isacke C.M."/>
            <person name="Pozzi A."/>
            <person name="Liang P."/>
        </authorList>
    </citation>
    <scope>NUCLEOTIDE SEQUENCE [MRNA]</scope>
    <scope>IDENTIFICATION BY MASS SPECTROMETRY</scope>
    <scope>GLYCOSYLATION</scope>
    <scope>INTERACTION WITH COL1A1</scope>
    <source>
        <strain>Sprague-Dawley</strain>
    </source>
</reference>
<reference key="2">
    <citation type="journal article" date="2005" name="Biochem. J.">
        <title>Uptake of denatured collagen into hepatic stellate cells: evidence for the involvement of urokinase plasminogen activator receptor-associated protein/Endo180.</title>
        <authorList>
            <person name="Mousavi S.A."/>
            <person name="Sato M."/>
            <person name="Sporstol M."/>
            <person name="Smedsrod B."/>
            <person name="Berg T."/>
            <person name="Kojima N."/>
            <person name="Senoo H."/>
        </authorList>
    </citation>
    <scope>FUNCTION</scope>
</reference>
<proteinExistence type="evidence at protein level"/>
<feature type="signal peptide" evidence="3">
    <location>
        <begin position="1"/>
        <end position="30"/>
    </location>
</feature>
<feature type="chain" id="PRO_0000046080" description="C-type mannose receptor 2">
    <location>
        <begin position="31"/>
        <end position="1480"/>
    </location>
</feature>
<feature type="topological domain" description="Extracellular" evidence="3">
    <location>
        <begin position="31"/>
        <end position="1413"/>
    </location>
</feature>
<feature type="transmembrane region" description="Helical" evidence="3">
    <location>
        <begin position="1414"/>
        <end position="1434"/>
    </location>
</feature>
<feature type="topological domain" description="Cytoplasmic" evidence="3">
    <location>
        <begin position="1435"/>
        <end position="1480"/>
    </location>
</feature>
<feature type="domain" description="Ricin B-type lectin" evidence="5">
    <location>
        <begin position="40"/>
        <end position="166"/>
    </location>
</feature>
<feature type="domain" description="Fibronectin type-II" evidence="6">
    <location>
        <begin position="181"/>
        <end position="229"/>
    </location>
</feature>
<feature type="domain" description="C-type lectin 1" evidence="4">
    <location>
        <begin position="243"/>
        <end position="359"/>
    </location>
</feature>
<feature type="domain" description="C-type lectin 2" evidence="4">
    <location>
        <begin position="388"/>
        <end position="504"/>
    </location>
</feature>
<feature type="domain" description="C-type lectin 3" evidence="4">
    <location>
        <begin position="527"/>
        <end position="643"/>
    </location>
</feature>
<feature type="domain" description="C-type lectin 4" evidence="4">
    <location>
        <begin position="677"/>
        <end position="808"/>
    </location>
</feature>
<feature type="domain" description="C-type lectin 5" evidence="4">
    <location>
        <begin position="831"/>
        <end position="950"/>
    </location>
</feature>
<feature type="domain" description="C-type lectin 6" evidence="4">
    <location>
        <begin position="978"/>
        <end position="1106"/>
    </location>
</feature>
<feature type="domain" description="C-type lectin 7" evidence="4">
    <location>
        <begin position="1131"/>
        <end position="1242"/>
    </location>
</feature>
<feature type="domain" description="C-type lectin 8" evidence="4">
    <location>
        <begin position="1271"/>
        <end position="1391"/>
    </location>
</feature>
<feature type="region of interest" description="Disordered" evidence="7">
    <location>
        <begin position="1446"/>
        <end position="1480"/>
    </location>
</feature>
<feature type="glycosylation site" description="N-linked (GlcNAc...) asparagine" evidence="3">
    <location>
        <position position="101"/>
    </location>
</feature>
<feature type="glycosylation site" description="N-linked (GlcNAc...) asparagine" evidence="3">
    <location>
        <position position="139"/>
    </location>
</feature>
<feature type="glycosylation site" description="N-linked (GlcNAc...) asparagine" evidence="3">
    <location>
        <position position="363"/>
    </location>
</feature>
<feature type="glycosylation site" description="N-linked (GlcNAc...) asparagine" evidence="3">
    <location>
        <position position="1028"/>
    </location>
</feature>
<feature type="glycosylation site" description="N-linked (GlcNAc...) asparagine" evidence="3">
    <location>
        <position position="1348"/>
    </location>
</feature>
<feature type="disulfide bond" evidence="1">
    <location>
        <begin position="53"/>
        <end position="67"/>
    </location>
</feature>
<feature type="disulfide bond" evidence="1">
    <location>
        <begin position="92"/>
        <end position="111"/>
    </location>
</feature>
<feature type="disulfide bond" evidence="1">
    <location>
        <begin position="186"/>
        <end position="212"/>
    </location>
</feature>
<feature type="disulfide bond" evidence="1">
    <location>
        <begin position="200"/>
        <end position="227"/>
    </location>
</feature>
<feature type="disulfide bond" evidence="1">
    <location>
        <begin position="265"/>
        <end position="358"/>
    </location>
</feature>
<feature type="disulfide bond" evidence="1">
    <location>
        <begin position="334"/>
        <end position="350"/>
    </location>
</feature>
<feature type="disulfide bond" evidence="1">
    <location>
        <begin position="409"/>
        <end position="503"/>
    </location>
</feature>
<feature type="disulfide bond" evidence="1">
    <location>
        <begin position="480"/>
        <end position="495"/>
    </location>
</feature>
<feature type="disulfide bond" evidence="1">
    <location>
        <begin position="617"/>
        <end position="634"/>
    </location>
</feature>
<feature type="disulfide bond" evidence="1">
    <location>
        <begin position="703"/>
        <end position="807"/>
    </location>
</feature>
<feature type="disulfide bond" evidence="1">
    <location>
        <begin position="784"/>
        <end position="799"/>
    </location>
</feature>
<feature type="disulfide bond" evidence="1">
    <location>
        <begin position="852"/>
        <end position="949"/>
    </location>
</feature>
<feature type="disulfide bond" evidence="1">
    <location>
        <begin position="926"/>
        <end position="941"/>
    </location>
</feature>
<feature type="disulfide bond" evidence="1">
    <location>
        <begin position="1077"/>
        <end position="1097"/>
    </location>
</feature>
<feature type="disulfide bond" evidence="1">
    <location>
        <begin position="1219"/>
        <end position="1233"/>
    </location>
</feature>
<feature type="disulfide bond" evidence="1">
    <location>
        <begin position="1367"/>
        <end position="1382"/>
    </location>
</feature>
<feature type="cross-link" description="Glycyl lysine isopeptide (Lys-Gly) (interchain with G-Cter in SUMO1)" evidence="2">
    <location>
        <position position="1141"/>
    </location>
</feature>
<comment type="function">
    <text evidence="1 8">May play a role as endocytotic lectin receptor displaying calcium-dependent lectin activity. Internalizes glycosylated ligands from the extracellular space for release in an endosomal compartment via clathrin-mediated endocytosis. May be involved in plasminogen activation system controlling the extracellular level of PLAUR/PLAU, and thus may regulate protease activity at the cell surface. May contribute to cellular uptake, remodeling and degradation of extracellular collagen matrices (By similarity). May participate in remodeling of extracellular matrix cooperating with the matrix metalloproteinases (MMPs) secreted by hepatic stellate cells. May mediate endocytosis of partially degraded collagens and glycoproteins produced in the extracellular matrix by MMPs.</text>
</comment>
<comment type="subunit">
    <text evidence="1 9">Interacts directly with PLAUR/UPAR and PLAU/pro-UPA to form a tri-molecular complex. Interacts with collagen V (By similarity). Interacts with C-terminal region of type I collagen/COL1A1.</text>
</comment>
<comment type="subcellular location">
    <subcellularLocation>
        <location evidence="10">Cell membrane</location>
        <topology evidence="10">Single-pass membrane protein</topology>
    </subcellularLocation>
</comment>
<comment type="domain">
    <text evidence="1">C-type lectin domains 3 to 8 are not required for calcium-dependent binding of mannose, fucose and N-acetylglucosamine. C-type lectin domain 2 is responsible for sugar-binding in a calcium-dependent manner (By similarity).</text>
</comment>
<comment type="domain">
    <text evidence="1">Fibronectin type-II domain mediates collagen-binding.</text>
</comment>
<comment type="domain">
    <text>Ricin B-type lectin domain contacts with the second C-type lectin domain.</text>
</comment>
<comment type="PTM">
    <text evidence="9">N-glycosylated.</text>
</comment>
<comment type="PTM">
    <text evidence="1">Phosphorylated.</text>
</comment>
<protein>
    <recommendedName>
        <fullName>C-type mannose receptor 2</fullName>
    </recommendedName>
    <alternativeName>
        <fullName>Endocytic receptor 180</fullName>
    </alternativeName>
    <alternativeName>
        <fullName>Macrophage mannose receptor 2</fullName>
    </alternativeName>
    <cdAntigenName>CD280</cdAntigenName>
</protein>
<name>MRC2_RAT</name>
<organism>
    <name type="scientific">Rattus norvegicus</name>
    <name type="common">Rat</name>
    <dbReference type="NCBI Taxonomy" id="10116"/>
    <lineage>
        <taxon>Eukaryota</taxon>
        <taxon>Metazoa</taxon>
        <taxon>Chordata</taxon>
        <taxon>Craniata</taxon>
        <taxon>Vertebrata</taxon>
        <taxon>Euteleostomi</taxon>
        <taxon>Mammalia</taxon>
        <taxon>Eutheria</taxon>
        <taxon>Euarchontoglires</taxon>
        <taxon>Glires</taxon>
        <taxon>Rodentia</taxon>
        <taxon>Myomorpha</taxon>
        <taxon>Muroidea</taxon>
        <taxon>Muridae</taxon>
        <taxon>Murinae</taxon>
        <taxon>Rattus</taxon>
    </lineage>
</organism>
<sequence>MGPIRPALAPWPRHLLRCVLLLGGLRLGHPADSAAALLEPDVFLIFSQGMQGCLEAQGVQVRVIPVCNASLPAQRWKWVSRNRLFNLGAMQCLGTGWPATNTTVSLGMYECDREALSLRWQCRTLGDQLSLLLGARANNASKPGTLERGDQTRSGHWNIYGSEEDLCARPYYEVYTIQGNSHGKPCTIPFKYDNQWFHGCTSTGREDGHLWCATTQDYGKDERWGFCPIKSNDCETFWDKDQLTDSCYQFNFQSTLSWREAWASCEQQGADLLSITEIHEQTYINGLLTGYSSTLWIGLNDLDTSGGWQWSDNSPLKYLNWESDQPDNPGEENCGVIRTESSGGWQNHDCSIALPYVCKKKPNATAEPIQPDRWANVKVECDPSWQPFQGHCYRLQAEKRSWQESKRACLRGGGDLLSIHSMTELEFITKQIKQEVEELWIGLNDLKLQMNFEWSDGSLVSFTHWHPFEPNNFRDSLEDCVTIWGPEGRWNDSPCNQSLPSICKKAGRLSQGTAEEDHGCRKGWTWHSPSCYWLGEDQVIYSDARRLCTDHGSQLVTITNRFEQAFVSSLIYNWEGEYFWTALQDLNSTGSFRWLSGDEVMYTHWNRDQPGYRRGGCVALATGSAMGLWEVKNCTSFRARYICRQSLGTPVTPELPGPDPTPSLTGSCPQGWVSDPKLRHCYKVFSSERLQEKKSWIEALGVCRELGAQLLSLASYEEEHFVANMLNKIFGESEPENHEQHWFWIGLNRRDPREGHSWRWSDGLGFSYHNFARSQHDDDNIRGCAVLDLASLQWVAMQCQTQLDWICKIPRGVDVREPDIGRQGRLEWVRFQEAEYKFFEHHSSWAQAQRICTWFQAELTSVHSQAELDFLGQNMQKLSSDQEQHWWIGLHTSESDGRFRWSDGSVINFVSWAPGKPRPIGKDKKCVYMTARQEDWGDQRCHTALPYICKRSNSSGETRPHDLPPSTLGGCPSGWNQFLNKCFRIQGQDPQDRVKWSEAQFSCEQQEAQLVTIANPLEQAYITASLPNVTFDLWIGLHGSQRDFQWIEQEPLLYTNWAPGEPSGPSPAPSGTKPTSCAVILHSPSAHFTGRWDDRSCTEETHGFICQKGTDPSLSPSPAAALPAPGTELSYLNRTFRLLQKPLRWKDALLLCESRNASLAHVPDPYTQAFLTQAARGLQAPLWIGLASEEGSRRYSWLSEEPLNYASWQDGEPQHTGGCAYVDVDGTWRTTSCDTKLQGAVCGVSRGPPPPRISYRGSCPQGLADSSWIPFREHCYSFHTELLLGHKEALQRCQRAGGTVLSILDEMENVFVWEHLQTAETQSRGAWLGMNFNPKGGMLVWQDNTAVNYSNWGPPGLGPSMLSHNSCYWIQSSSGLWRPGACTNVTMGVVCKLPRVEENGFLPSAALPENPVALVVVLTAAVLLLLALLTGALILYRRRQSAERGSFEGARYSRSSRSGPAEATEKNILVSDMEMNEQQE</sequence>
<accession>Q4TU93</accession>
<dbReference type="EMBL" id="DQ058624">
    <property type="protein sequence ID" value="AAY53886.1"/>
    <property type="molecule type" value="mRNA"/>
</dbReference>
<dbReference type="RefSeq" id="NP_001019858.1">
    <property type="nucleotide sequence ID" value="NM_001024687.1"/>
</dbReference>
<dbReference type="SMR" id="Q4TU93"/>
<dbReference type="FunCoup" id="Q4TU93">
    <property type="interactions" value="864"/>
</dbReference>
<dbReference type="STRING" id="10116.ENSRNOP00000052010"/>
<dbReference type="GlyCosmos" id="Q4TU93">
    <property type="glycosylation" value="5 sites, No reported glycans"/>
</dbReference>
<dbReference type="GlyGen" id="Q4TU93">
    <property type="glycosylation" value="6 sites"/>
</dbReference>
<dbReference type="iPTMnet" id="Q4TU93"/>
<dbReference type="PhosphoSitePlus" id="Q4TU93"/>
<dbReference type="PaxDb" id="10116-ENSRNOP00000052010"/>
<dbReference type="GeneID" id="498011"/>
<dbReference type="KEGG" id="rno:498011"/>
<dbReference type="UCSC" id="RGD:1559436">
    <property type="organism name" value="rat"/>
</dbReference>
<dbReference type="AGR" id="RGD:1559436"/>
<dbReference type="CTD" id="9902"/>
<dbReference type="RGD" id="1559436">
    <property type="gene designation" value="Mrc2"/>
</dbReference>
<dbReference type="eggNOG" id="KOG4297">
    <property type="taxonomic scope" value="Eukaryota"/>
</dbReference>
<dbReference type="InParanoid" id="Q4TU93"/>
<dbReference type="PhylomeDB" id="Q4TU93"/>
<dbReference type="Reactome" id="R-RNO-1236978">
    <property type="pathway name" value="Cross-presentation of soluble exogenous antigens (endosomes)"/>
</dbReference>
<dbReference type="PRO" id="PR:Q4TU93"/>
<dbReference type="Proteomes" id="UP000002494">
    <property type="component" value="Unplaced"/>
</dbReference>
<dbReference type="GO" id="GO:0005886">
    <property type="term" value="C:plasma membrane"/>
    <property type="evidence" value="ECO:0007669"/>
    <property type="project" value="UniProtKB-SubCell"/>
</dbReference>
<dbReference type="GO" id="GO:0030246">
    <property type="term" value="F:carbohydrate binding"/>
    <property type="evidence" value="ECO:0007669"/>
    <property type="project" value="UniProtKB-KW"/>
</dbReference>
<dbReference type="GO" id="GO:0005518">
    <property type="term" value="F:collagen binding"/>
    <property type="evidence" value="ECO:0000353"/>
    <property type="project" value="RGD"/>
</dbReference>
<dbReference type="GO" id="GO:0038023">
    <property type="term" value="F:signaling receptor activity"/>
    <property type="evidence" value="ECO:0000318"/>
    <property type="project" value="GO_Central"/>
</dbReference>
<dbReference type="GO" id="GO:0030574">
    <property type="term" value="P:collagen catabolic process"/>
    <property type="evidence" value="ECO:0000266"/>
    <property type="project" value="RGD"/>
</dbReference>
<dbReference type="GO" id="GO:0006897">
    <property type="term" value="P:endocytosis"/>
    <property type="evidence" value="ECO:0007669"/>
    <property type="project" value="UniProtKB-KW"/>
</dbReference>
<dbReference type="CDD" id="cd23408">
    <property type="entry name" value="beta-trefoil_Ricin_MRC2"/>
    <property type="match status" value="1"/>
</dbReference>
<dbReference type="CDD" id="cd00037">
    <property type="entry name" value="CLECT"/>
    <property type="match status" value="7"/>
</dbReference>
<dbReference type="CDD" id="cd03590">
    <property type="entry name" value="CLECT_DC-SIGN_like"/>
    <property type="match status" value="1"/>
</dbReference>
<dbReference type="CDD" id="cd00062">
    <property type="entry name" value="FN2"/>
    <property type="match status" value="1"/>
</dbReference>
<dbReference type="FunFam" id="3.10.100.10:FF:000026">
    <property type="entry name" value="C-type mannose receptor 2"/>
    <property type="match status" value="1"/>
</dbReference>
<dbReference type="FunFam" id="3.10.100.10:FF:000035">
    <property type="entry name" value="C-type mannose receptor 2"/>
    <property type="match status" value="1"/>
</dbReference>
<dbReference type="FunFam" id="2.10.10.10:FF:000001">
    <property type="entry name" value="Fibronectin 1a isoform 1"/>
    <property type="match status" value="1"/>
</dbReference>
<dbReference type="FunFam" id="2.80.10.50:FF:000035">
    <property type="entry name" value="Mannose receptor C type 2"/>
    <property type="match status" value="1"/>
</dbReference>
<dbReference type="FunFam" id="3.10.100.10:FF:000019">
    <property type="entry name" value="Mannose receptor C type 2"/>
    <property type="match status" value="1"/>
</dbReference>
<dbReference type="FunFam" id="3.10.100.10:FF:000020">
    <property type="entry name" value="Mannose receptor C type 2"/>
    <property type="match status" value="1"/>
</dbReference>
<dbReference type="FunFam" id="3.10.100.10:FF:000021">
    <property type="entry name" value="Mannose receptor C type 2"/>
    <property type="match status" value="1"/>
</dbReference>
<dbReference type="FunFam" id="3.10.100.10:FF:000029">
    <property type="entry name" value="Mannose receptor C type 2"/>
    <property type="match status" value="1"/>
</dbReference>
<dbReference type="FunFam" id="3.10.100.10:FF:000033">
    <property type="entry name" value="Mannose receptor C type 2"/>
    <property type="match status" value="1"/>
</dbReference>
<dbReference type="FunFam" id="3.10.100.10:FF:000018">
    <property type="entry name" value="Mannose receptor, C type 2"/>
    <property type="match status" value="1"/>
</dbReference>
<dbReference type="Gene3D" id="2.80.10.50">
    <property type="match status" value="1"/>
</dbReference>
<dbReference type="Gene3D" id="2.10.10.10">
    <property type="entry name" value="Fibronectin, type II, collagen-binding"/>
    <property type="match status" value="1"/>
</dbReference>
<dbReference type="Gene3D" id="3.10.100.10">
    <property type="entry name" value="Mannose-Binding Protein A, subunit A"/>
    <property type="match status" value="8"/>
</dbReference>
<dbReference type="InterPro" id="IPR001304">
    <property type="entry name" value="C-type_lectin-like"/>
</dbReference>
<dbReference type="InterPro" id="IPR016186">
    <property type="entry name" value="C-type_lectin-like/link_sf"/>
</dbReference>
<dbReference type="InterPro" id="IPR050111">
    <property type="entry name" value="C-type_lectin/snaclec_domain"/>
</dbReference>
<dbReference type="InterPro" id="IPR018378">
    <property type="entry name" value="C-type_lectin_CS"/>
</dbReference>
<dbReference type="InterPro" id="IPR033989">
    <property type="entry name" value="CD209-like_CTLD"/>
</dbReference>
<dbReference type="InterPro" id="IPR016187">
    <property type="entry name" value="CTDL_fold"/>
</dbReference>
<dbReference type="InterPro" id="IPR000562">
    <property type="entry name" value="FN_type2_dom"/>
</dbReference>
<dbReference type="InterPro" id="IPR036943">
    <property type="entry name" value="FN_type2_sf"/>
</dbReference>
<dbReference type="InterPro" id="IPR013806">
    <property type="entry name" value="Kringle-like"/>
</dbReference>
<dbReference type="InterPro" id="IPR035992">
    <property type="entry name" value="Ricin_B-like_lectins"/>
</dbReference>
<dbReference type="InterPro" id="IPR000772">
    <property type="entry name" value="Ricin_B_lectin"/>
</dbReference>
<dbReference type="PANTHER" id="PTHR22803">
    <property type="entry name" value="MANNOSE, PHOSPHOLIPASE, LECTIN RECEPTOR RELATED"/>
    <property type="match status" value="1"/>
</dbReference>
<dbReference type="Pfam" id="PF24562">
    <property type="entry name" value="CysR_MRC2_N"/>
    <property type="match status" value="1"/>
</dbReference>
<dbReference type="Pfam" id="PF00040">
    <property type="entry name" value="fn2"/>
    <property type="match status" value="1"/>
</dbReference>
<dbReference type="Pfam" id="PF00059">
    <property type="entry name" value="Lectin_C"/>
    <property type="match status" value="8"/>
</dbReference>
<dbReference type="PRINTS" id="PR00013">
    <property type="entry name" value="FNTYPEII"/>
</dbReference>
<dbReference type="SMART" id="SM00034">
    <property type="entry name" value="CLECT"/>
    <property type="match status" value="8"/>
</dbReference>
<dbReference type="SMART" id="SM00059">
    <property type="entry name" value="FN2"/>
    <property type="match status" value="1"/>
</dbReference>
<dbReference type="SMART" id="SM00458">
    <property type="entry name" value="RICIN"/>
    <property type="match status" value="1"/>
</dbReference>
<dbReference type="SUPFAM" id="SSF56436">
    <property type="entry name" value="C-type lectin-like"/>
    <property type="match status" value="8"/>
</dbReference>
<dbReference type="SUPFAM" id="SSF57440">
    <property type="entry name" value="Kringle-like"/>
    <property type="match status" value="1"/>
</dbReference>
<dbReference type="SUPFAM" id="SSF50370">
    <property type="entry name" value="Ricin B-like lectins"/>
    <property type="match status" value="1"/>
</dbReference>
<dbReference type="PROSITE" id="PS00615">
    <property type="entry name" value="C_TYPE_LECTIN_1"/>
    <property type="match status" value="3"/>
</dbReference>
<dbReference type="PROSITE" id="PS50041">
    <property type="entry name" value="C_TYPE_LECTIN_2"/>
    <property type="match status" value="8"/>
</dbReference>
<dbReference type="PROSITE" id="PS00023">
    <property type="entry name" value="FN2_1"/>
    <property type="match status" value="1"/>
</dbReference>
<dbReference type="PROSITE" id="PS51092">
    <property type="entry name" value="FN2_2"/>
    <property type="match status" value="1"/>
</dbReference>
<dbReference type="PROSITE" id="PS50231">
    <property type="entry name" value="RICIN_B_LECTIN"/>
    <property type="match status" value="1"/>
</dbReference>
<gene>
    <name type="primary">Mrc2</name>
    <name type="synonym">Endo180</name>
</gene>
<keyword id="KW-0106">Calcium</keyword>
<keyword id="KW-1003">Cell membrane</keyword>
<keyword id="KW-1015">Disulfide bond</keyword>
<keyword id="KW-0254">Endocytosis</keyword>
<keyword id="KW-0325">Glycoprotein</keyword>
<keyword id="KW-1017">Isopeptide bond</keyword>
<keyword id="KW-0430">Lectin</keyword>
<keyword id="KW-0472">Membrane</keyword>
<keyword id="KW-0597">Phosphoprotein</keyword>
<keyword id="KW-0675">Receptor</keyword>
<keyword id="KW-1185">Reference proteome</keyword>
<keyword id="KW-0677">Repeat</keyword>
<keyword id="KW-0732">Signal</keyword>
<keyword id="KW-0812">Transmembrane</keyword>
<keyword id="KW-1133">Transmembrane helix</keyword>
<keyword id="KW-0832">Ubl conjugation</keyword>